<keyword id="KW-0560">Oxidoreductase</keyword>
<keyword id="KW-1185">Reference proteome</keyword>
<name>MSRB_STRP1</name>
<evidence type="ECO:0000255" key="1">
    <source>
        <dbReference type="HAMAP-Rule" id="MF_01400"/>
    </source>
</evidence>
<evidence type="ECO:0000255" key="2">
    <source>
        <dbReference type="PROSITE-ProRule" id="PRU01126"/>
    </source>
</evidence>
<reference key="1">
    <citation type="journal article" date="2001" name="Proc. Natl. Acad. Sci. U.S.A.">
        <title>Complete genome sequence of an M1 strain of Streptococcus pyogenes.</title>
        <authorList>
            <person name="Ferretti J.J."/>
            <person name="McShan W.M."/>
            <person name="Ajdic D.J."/>
            <person name="Savic D.J."/>
            <person name="Savic G."/>
            <person name="Lyon K."/>
            <person name="Primeaux C."/>
            <person name="Sezate S."/>
            <person name="Suvorov A.N."/>
            <person name="Kenton S."/>
            <person name="Lai H.S."/>
            <person name="Lin S.P."/>
            <person name="Qian Y."/>
            <person name="Jia H.G."/>
            <person name="Najar F.Z."/>
            <person name="Ren Q."/>
            <person name="Zhu H."/>
            <person name="Song L."/>
            <person name="White J."/>
            <person name="Yuan X."/>
            <person name="Clifton S.W."/>
            <person name="Roe B.A."/>
            <person name="McLaughlin R.E."/>
        </authorList>
    </citation>
    <scope>NUCLEOTIDE SEQUENCE [LARGE SCALE GENOMIC DNA]</scope>
    <source>
        <strain>ATCC 700294 / SF370 / Serotype M1</strain>
    </source>
</reference>
<reference key="2">
    <citation type="journal article" date="2005" name="J. Infect. Dis.">
        <title>Evolutionary origin and emergence of a highly successful clone of serotype M1 group A Streptococcus involved multiple horizontal gene transfer events.</title>
        <authorList>
            <person name="Sumby P."/>
            <person name="Porcella S.F."/>
            <person name="Madrigal A.G."/>
            <person name="Barbian K.D."/>
            <person name="Virtaneva K."/>
            <person name="Ricklefs S.M."/>
            <person name="Sturdevant D.E."/>
            <person name="Graham M.R."/>
            <person name="Vuopio-Varkila J."/>
            <person name="Hoe N.P."/>
            <person name="Musser J.M."/>
        </authorList>
    </citation>
    <scope>NUCLEOTIDE SEQUENCE [LARGE SCALE GENOMIC DNA]</scope>
    <source>
        <strain>ATCC BAA-947 / MGAS5005 / Serotype M1</strain>
    </source>
</reference>
<protein>
    <recommendedName>
        <fullName evidence="1">Peptide methionine sulfoxide reductase MsrB</fullName>
        <ecNumber evidence="1">1.8.4.12</ecNumber>
    </recommendedName>
    <alternativeName>
        <fullName evidence="1">Peptide-methionine (R)-S-oxide reductase</fullName>
    </alternativeName>
</protein>
<dbReference type="EC" id="1.8.4.12" evidence="1"/>
<dbReference type="EMBL" id="AE004092">
    <property type="protein sequence ID" value="AAK33942.1"/>
    <property type="molecule type" value="Genomic_DNA"/>
</dbReference>
<dbReference type="EMBL" id="CP000017">
    <property type="protein sequence ID" value="AAZ51396.1"/>
    <property type="molecule type" value="Genomic_DNA"/>
</dbReference>
<dbReference type="RefSeq" id="NP_269221.1">
    <property type="nucleotide sequence ID" value="NC_002737.2"/>
</dbReference>
<dbReference type="SMR" id="Q99ZV6"/>
<dbReference type="PaxDb" id="1314-HKU360_00845"/>
<dbReference type="KEGG" id="spy:SPy_1055"/>
<dbReference type="KEGG" id="spz:M5005_Spy0778"/>
<dbReference type="PATRIC" id="fig|160490.10.peg.910"/>
<dbReference type="HOGENOM" id="CLU_031040_8_5_9"/>
<dbReference type="OMA" id="DEQWRAE"/>
<dbReference type="Proteomes" id="UP000000750">
    <property type="component" value="Chromosome"/>
</dbReference>
<dbReference type="GO" id="GO:0005737">
    <property type="term" value="C:cytoplasm"/>
    <property type="evidence" value="ECO:0007669"/>
    <property type="project" value="TreeGrafter"/>
</dbReference>
<dbReference type="GO" id="GO:0033743">
    <property type="term" value="F:peptide-methionine (R)-S-oxide reductase activity"/>
    <property type="evidence" value="ECO:0007669"/>
    <property type="project" value="UniProtKB-UniRule"/>
</dbReference>
<dbReference type="GO" id="GO:0030091">
    <property type="term" value="P:protein repair"/>
    <property type="evidence" value="ECO:0007669"/>
    <property type="project" value="InterPro"/>
</dbReference>
<dbReference type="GO" id="GO:0006979">
    <property type="term" value="P:response to oxidative stress"/>
    <property type="evidence" value="ECO:0007669"/>
    <property type="project" value="InterPro"/>
</dbReference>
<dbReference type="FunFam" id="2.170.150.20:FF:000003">
    <property type="entry name" value="Peptide methionine sulfoxide reductase MsrB"/>
    <property type="match status" value="1"/>
</dbReference>
<dbReference type="Gene3D" id="2.170.150.20">
    <property type="entry name" value="Peptide methionine sulfoxide reductase"/>
    <property type="match status" value="1"/>
</dbReference>
<dbReference type="HAMAP" id="MF_01400">
    <property type="entry name" value="MsrB"/>
    <property type="match status" value="1"/>
</dbReference>
<dbReference type="InterPro" id="IPR028427">
    <property type="entry name" value="Met_Sox_Rdtase_MsrB"/>
</dbReference>
<dbReference type="InterPro" id="IPR002579">
    <property type="entry name" value="Met_Sox_Rdtase_MsrB_dom"/>
</dbReference>
<dbReference type="InterPro" id="IPR011057">
    <property type="entry name" value="Mss4-like_sf"/>
</dbReference>
<dbReference type="NCBIfam" id="TIGR00357">
    <property type="entry name" value="peptide-methionine (R)-S-oxide reductase MsrB"/>
    <property type="match status" value="1"/>
</dbReference>
<dbReference type="PANTHER" id="PTHR10173">
    <property type="entry name" value="METHIONINE SULFOXIDE REDUCTASE"/>
    <property type="match status" value="1"/>
</dbReference>
<dbReference type="PANTHER" id="PTHR10173:SF59">
    <property type="entry name" value="PEPTIDE METHIONINE SULFOXIDE REDUCTASE MSRA_MSRB"/>
    <property type="match status" value="1"/>
</dbReference>
<dbReference type="Pfam" id="PF01641">
    <property type="entry name" value="SelR"/>
    <property type="match status" value="1"/>
</dbReference>
<dbReference type="SUPFAM" id="SSF51316">
    <property type="entry name" value="Mss4-like"/>
    <property type="match status" value="1"/>
</dbReference>
<dbReference type="PROSITE" id="PS51790">
    <property type="entry name" value="MSRB"/>
    <property type="match status" value="1"/>
</dbReference>
<accession>Q99ZV6</accession>
<accession>Q48Z22</accession>
<organism>
    <name type="scientific">Streptococcus pyogenes serotype M1</name>
    <dbReference type="NCBI Taxonomy" id="301447"/>
    <lineage>
        <taxon>Bacteria</taxon>
        <taxon>Bacillati</taxon>
        <taxon>Bacillota</taxon>
        <taxon>Bacilli</taxon>
        <taxon>Lactobacillales</taxon>
        <taxon>Streptococcaceae</taxon>
        <taxon>Streptococcus</taxon>
    </lineage>
</organism>
<comment type="catalytic activity">
    <reaction evidence="1">
        <text>L-methionyl-[protein] + [thioredoxin]-disulfide + H2O = L-methionyl-(R)-S-oxide-[protein] + [thioredoxin]-dithiol</text>
        <dbReference type="Rhea" id="RHEA:24164"/>
        <dbReference type="Rhea" id="RHEA-COMP:10698"/>
        <dbReference type="Rhea" id="RHEA-COMP:10700"/>
        <dbReference type="Rhea" id="RHEA-COMP:12313"/>
        <dbReference type="Rhea" id="RHEA-COMP:12314"/>
        <dbReference type="ChEBI" id="CHEBI:15377"/>
        <dbReference type="ChEBI" id="CHEBI:16044"/>
        <dbReference type="ChEBI" id="CHEBI:29950"/>
        <dbReference type="ChEBI" id="CHEBI:45764"/>
        <dbReference type="ChEBI" id="CHEBI:50058"/>
        <dbReference type="EC" id="1.8.4.12"/>
    </reaction>
</comment>
<comment type="similarity">
    <text evidence="1">Belongs to the MsrB Met sulfoxide reductase family.</text>
</comment>
<gene>
    <name evidence="1" type="primary">msrB</name>
    <name type="synonym">csrA</name>
    <name type="ordered locus">SPy_1055</name>
    <name type="ordered locus">M5005_Spy0778</name>
</gene>
<feature type="chain" id="PRO_0000140307" description="Peptide methionine sulfoxide reductase MsrB">
    <location>
        <begin position="1"/>
        <end position="145"/>
    </location>
</feature>
<feature type="domain" description="MsrB" evidence="2">
    <location>
        <begin position="4"/>
        <end position="127"/>
    </location>
</feature>
<feature type="active site" description="Nucleophile" evidence="2">
    <location>
        <position position="116"/>
    </location>
</feature>
<sequence>METSDELKQRIGDLSYEVTQHAATESPFTGEYDNFFEKGIYVDIVSGEVLFSSLDKFNSGCGWPAFSKPIENRMVTNHDDSSYGMRRVEVKSREAGSHLGHVFSDGPKEAGGLRYCINSAALKFIPYDQMEKEGYAQWLTLFDET</sequence>
<proteinExistence type="inferred from homology"/>